<organism>
    <name type="scientific">Rhizobium etli (strain CIAT 652)</name>
    <dbReference type="NCBI Taxonomy" id="491916"/>
    <lineage>
        <taxon>Bacteria</taxon>
        <taxon>Pseudomonadati</taxon>
        <taxon>Pseudomonadota</taxon>
        <taxon>Alphaproteobacteria</taxon>
        <taxon>Hyphomicrobiales</taxon>
        <taxon>Rhizobiaceae</taxon>
        <taxon>Rhizobium/Agrobacterium group</taxon>
        <taxon>Rhizobium</taxon>
    </lineage>
</organism>
<comment type="function">
    <text evidence="1">Component of the acetyl coenzyme A carboxylase (ACC) complex. First, biotin carboxylase catalyzes the carboxylation of biotin on its carrier protein (BCCP) and then the CO(2) group is transferred by the carboxyltransferase to acetyl-CoA to form malonyl-CoA.</text>
</comment>
<comment type="catalytic activity">
    <reaction evidence="1">
        <text>N(6)-carboxybiotinyl-L-lysyl-[protein] + acetyl-CoA = N(6)-biotinyl-L-lysyl-[protein] + malonyl-CoA</text>
        <dbReference type="Rhea" id="RHEA:54728"/>
        <dbReference type="Rhea" id="RHEA-COMP:10505"/>
        <dbReference type="Rhea" id="RHEA-COMP:10506"/>
        <dbReference type="ChEBI" id="CHEBI:57288"/>
        <dbReference type="ChEBI" id="CHEBI:57384"/>
        <dbReference type="ChEBI" id="CHEBI:83144"/>
        <dbReference type="ChEBI" id="CHEBI:83145"/>
        <dbReference type="EC" id="2.1.3.15"/>
    </reaction>
</comment>
<comment type="pathway">
    <text evidence="1">Lipid metabolism; malonyl-CoA biosynthesis; malonyl-CoA from acetyl-CoA: step 1/1.</text>
</comment>
<comment type="subunit">
    <text evidence="1">Acetyl-CoA carboxylase is a heterohexamer composed of biotin carboxyl carrier protein (AccB), biotin carboxylase (AccC) and two subunits each of ACCase subunit alpha (AccA) and ACCase subunit beta (AccD).</text>
</comment>
<comment type="subcellular location">
    <subcellularLocation>
        <location evidence="1">Cytoplasm</location>
    </subcellularLocation>
</comment>
<comment type="similarity">
    <text evidence="1">Belongs to the AccA family.</text>
</comment>
<gene>
    <name evidence="1" type="primary">accA</name>
    <name type="ordered locus">RHECIAT_CH0004099</name>
</gene>
<keyword id="KW-0067">ATP-binding</keyword>
<keyword id="KW-0963">Cytoplasm</keyword>
<keyword id="KW-0275">Fatty acid biosynthesis</keyword>
<keyword id="KW-0276">Fatty acid metabolism</keyword>
<keyword id="KW-0444">Lipid biosynthesis</keyword>
<keyword id="KW-0443">Lipid metabolism</keyword>
<keyword id="KW-0547">Nucleotide-binding</keyword>
<keyword id="KW-0808">Transferase</keyword>
<dbReference type="EC" id="2.1.3.15" evidence="1"/>
<dbReference type="EMBL" id="CP001074">
    <property type="protein sequence ID" value="ACE93029.1"/>
    <property type="molecule type" value="Genomic_DNA"/>
</dbReference>
<dbReference type="SMR" id="B3PPF4"/>
<dbReference type="KEGG" id="rec:RHECIAT_CH0004099"/>
<dbReference type="eggNOG" id="COG0825">
    <property type="taxonomic scope" value="Bacteria"/>
</dbReference>
<dbReference type="HOGENOM" id="CLU_015486_0_2_5"/>
<dbReference type="UniPathway" id="UPA00655">
    <property type="reaction ID" value="UER00711"/>
</dbReference>
<dbReference type="Proteomes" id="UP000008817">
    <property type="component" value="Chromosome"/>
</dbReference>
<dbReference type="GO" id="GO:0009317">
    <property type="term" value="C:acetyl-CoA carboxylase complex"/>
    <property type="evidence" value="ECO:0007669"/>
    <property type="project" value="InterPro"/>
</dbReference>
<dbReference type="GO" id="GO:0003989">
    <property type="term" value="F:acetyl-CoA carboxylase activity"/>
    <property type="evidence" value="ECO:0007669"/>
    <property type="project" value="InterPro"/>
</dbReference>
<dbReference type="GO" id="GO:0005524">
    <property type="term" value="F:ATP binding"/>
    <property type="evidence" value="ECO:0007669"/>
    <property type="project" value="UniProtKB-KW"/>
</dbReference>
<dbReference type="GO" id="GO:0016743">
    <property type="term" value="F:carboxyl- or carbamoyltransferase activity"/>
    <property type="evidence" value="ECO:0007669"/>
    <property type="project" value="UniProtKB-UniRule"/>
</dbReference>
<dbReference type="GO" id="GO:0006633">
    <property type="term" value="P:fatty acid biosynthetic process"/>
    <property type="evidence" value="ECO:0007669"/>
    <property type="project" value="UniProtKB-KW"/>
</dbReference>
<dbReference type="GO" id="GO:2001295">
    <property type="term" value="P:malonyl-CoA biosynthetic process"/>
    <property type="evidence" value="ECO:0007669"/>
    <property type="project" value="UniProtKB-UniRule"/>
</dbReference>
<dbReference type="Gene3D" id="3.90.226.10">
    <property type="entry name" value="2-enoyl-CoA Hydratase, Chain A, domain 1"/>
    <property type="match status" value="1"/>
</dbReference>
<dbReference type="HAMAP" id="MF_00823">
    <property type="entry name" value="AcetylCoA_CT_alpha"/>
    <property type="match status" value="1"/>
</dbReference>
<dbReference type="InterPro" id="IPR001095">
    <property type="entry name" value="Acetyl_CoA_COase_a_su"/>
</dbReference>
<dbReference type="InterPro" id="IPR029045">
    <property type="entry name" value="ClpP/crotonase-like_dom_sf"/>
</dbReference>
<dbReference type="InterPro" id="IPR011763">
    <property type="entry name" value="COA_CT_C"/>
</dbReference>
<dbReference type="NCBIfam" id="TIGR00513">
    <property type="entry name" value="accA"/>
    <property type="match status" value="1"/>
</dbReference>
<dbReference type="NCBIfam" id="NF041504">
    <property type="entry name" value="AccA_sub"/>
    <property type="match status" value="1"/>
</dbReference>
<dbReference type="NCBIfam" id="NF004344">
    <property type="entry name" value="PRK05724.1"/>
    <property type="match status" value="1"/>
</dbReference>
<dbReference type="PANTHER" id="PTHR42853">
    <property type="entry name" value="ACETYL-COENZYME A CARBOXYLASE CARBOXYL TRANSFERASE SUBUNIT ALPHA"/>
    <property type="match status" value="1"/>
</dbReference>
<dbReference type="PANTHER" id="PTHR42853:SF3">
    <property type="entry name" value="ACETYL-COENZYME A CARBOXYLASE CARBOXYL TRANSFERASE SUBUNIT ALPHA, CHLOROPLASTIC"/>
    <property type="match status" value="1"/>
</dbReference>
<dbReference type="Pfam" id="PF03255">
    <property type="entry name" value="ACCA"/>
    <property type="match status" value="1"/>
</dbReference>
<dbReference type="PRINTS" id="PR01069">
    <property type="entry name" value="ACCCTRFRASEA"/>
</dbReference>
<dbReference type="SUPFAM" id="SSF52096">
    <property type="entry name" value="ClpP/crotonase"/>
    <property type="match status" value="1"/>
</dbReference>
<dbReference type="PROSITE" id="PS50989">
    <property type="entry name" value="COA_CT_CTER"/>
    <property type="match status" value="1"/>
</dbReference>
<evidence type="ECO:0000255" key="1">
    <source>
        <dbReference type="HAMAP-Rule" id="MF_00823"/>
    </source>
</evidence>
<evidence type="ECO:0000255" key="2">
    <source>
        <dbReference type="PROSITE-ProRule" id="PRU01137"/>
    </source>
</evidence>
<feature type="chain" id="PRO_1000134510" description="Acetyl-coenzyme A carboxylase carboxyl transferase subunit alpha">
    <location>
        <begin position="1"/>
        <end position="317"/>
    </location>
</feature>
<feature type="domain" description="CoA carboxyltransferase C-terminal" evidence="2">
    <location>
        <begin position="40"/>
        <end position="293"/>
    </location>
</feature>
<proteinExistence type="inferred from homology"/>
<sequence length="317" mass="34641">MHNYLDFEKPISDLEGKIIELKKLATEDESIDTTDEIGRLEVRVREAILEIYSKLNAWQKTQVARHPQRPHFVDYAKTLFQEFTPLAGDRKFSEDAAIQAGLARFRGQPVAVIGQEKGNDTKSRLKHNFGSPRPEGYRKAIRILEMADRFGLPVISLVDTAGAYPGVGAEERGQAEAIARSTEMCLGVKVPLVSVVIGEGGSGGAIAIATGNRVYMLEHSIYSVISPEGAASILWRDSTRAREAATNMKITAEDLKSLGVIDGIISEPLGGAHRDPDSVIAATGDVIANALAEMSSRSGEQLRNERRQKFLNMGRNL</sequence>
<reference key="1">
    <citation type="journal article" date="2010" name="Appl. Environ. Microbiol.">
        <title>Conserved symbiotic plasmid DNA sequences in the multireplicon pangenomic structure of Rhizobium etli.</title>
        <authorList>
            <person name="Gonzalez V."/>
            <person name="Acosta J.L."/>
            <person name="Santamaria R.I."/>
            <person name="Bustos P."/>
            <person name="Fernandez J.L."/>
            <person name="Hernandez Gonzalez I.L."/>
            <person name="Diaz R."/>
            <person name="Flores M."/>
            <person name="Palacios R."/>
            <person name="Mora J."/>
            <person name="Davila G."/>
        </authorList>
    </citation>
    <scope>NUCLEOTIDE SEQUENCE [LARGE SCALE GENOMIC DNA]</scope>
    <source>
        <strain>CIAT 652</strain>
    </source>
</reference>
<accession>B3PPF4</accession>
<name>ACCA_RHIE6</name>
<protein>
    <recommendedName>
        <fullName evidence="1">Acetyl-coenzyme A carboxylase carboxyl transferase subunit alpha</fullName>
        <shortName evidence="1">ACCase subunit alpha</shortName>
        <shortName evidence="1">Acetyl-CoA carboxylase carboxyltransferase subunit alpha</shortName>
        <ecNumber evidence="1">2.1.3.15</ecNumber>
    </recommendedName>
</protein>